<evidence type="ECO:0000250" key="1">
    <source>
        <dbReference type="UniProtKB" id="P04798"/>
    </source>
</evidence>
<evidence type="ECO:0000250" key="2">
    <source>
        <dbReference type="UniProtKB" id="Q94IP1"/>
    </source>
</evidence>
<evidence type="ECO:0000255" key="3"/>
<evidence type="ECO:0000269" key="4">
    <source>
    </source>
</evidence>
<evidence type="ECO:0000269" key="5">
    <source>
    </source>
</evidence>
<evidence type="ECO:0000269" key="6">
    <source>
    </source>
</evidence>
<evidence type="ECO:0000303" key="7">
    <source>
    </source>
</evidence>
<evidence type="ECO:0000303" key="8">
    <source>
    </source>
</evidence>
<evidence type="ECO:0000303" key="9">
    <source>
    </source>
</evidence>
<evidence type="ECO:0000305" key="10"/>
<evidence type="ECO:0000305" key="11">
    <source>
    </source>
</evidence>
<gene>
    <name evidence="9" type="primary">SLS2</name>
    <name evidence="8" type="synonym">CYP72C</name>
    <name evidence="7" type="synonym">SLS</name>
    <name evidence="10" type="ORF">Caros020659</name>
</gene>
<feature type="chain" id="PRO_0000446409" description="Secologanin synthase 2">
    <location>
        <begin position="1"/>
        <end position="527"/>
    </location>
</feature>
<feature type="topological domain" description="Lumenal" evidence="11">
    <location>
        <begin position="1"/>
        <end position="11"/>
    </location>
</feature>
<feature type="transmembrane region" description="Helical" evidence="3">
    <location>
        <begin position="12"/>
        <end position="32"/>
    </location>
</feature>
<feature type="topological domain" description="Cytoplasmic" evidence="11">
    <location>
        <begin position="33"/>
        <end position="527"/>
    </location>
</feature>
<feature type="binding site" description="axial binding residue" evidence="1">
    <location>
        <position position="470"/>
    </location>
    <ligand>
        <name>heme</name>
        <dbReference type="ChEBI" id="CHEBI:30413"/>
    </ligand>
    <ligandPart>
        <name>Fe</name>
        <dbReference type="ChEBI" id="CHEBI:18248"/>
    </ligandPart>
</feature>
<proteinExistence type="evidence at protein level"/>
<organism>
    <name type="scientific">Catharanthus roseus</name>
    <name type="common">Madagascar periwinkle</name>
    <name type="synonym">Vinca rosea</name>
    <dbReference type="NCBI Taxonomy" id="4058"/>
    <lineage>
        <taxon>Eukaryota</taxon>
        <taxon>Viridiplantae</taxon>
        <taxon>Streptophyta</taxon>
        <taxon>Embryophyta</taxon>
        <taxon>Tracheophyta</taxon>
        <taxon>Spermatophyta</taxon>
        <taxon>Magnoliopsida</taxon>
        <taxon>eudicotyledons</taxon>
        <taxon>Gunneridae</taxon>
        <taxon>Pentapetalae</taxon>
        <taxon>asterids</taxon>
        <taxon>lamiids</taxon>
        <taxon>Gentianales</taxon>
        <taxon>Apocynaceae</taxon>
        <taxon>Rauvolfioideae</taxon>
        <taxon>Vinceae</taxon>
        <taxon>Catharanthinae</taxon>
        <taxon>Catharanthus</taxon>
    </lineage>
</organism>
<sequence length="527" mass="61055">MEMDMDIIRKAIAATIFALVMAWAWRVLDWAWFTPKRIEKRLRQQGFRGNPYRFLVGDVKESGKMHQEALSNPMEFDNDIVPRLMPHINHTIKTYGRNSFTWMGRIPRIHVMEPELIKEVLTHSSKYQKNFDVHNPLVKFLLTGVGSFEGAKWSKHRRIISPAFTLEKLKSMLPAFAICYHDMLTKWEKLAEKEGSHEVDIFPTFDVLTSDVISKVAFGSTYDEGGKIFRLLKELMDLTIDCMRDVYIPGWSYLPTKRNKRMKEINKEITDMLRFIINKRMKALKAGEPGEDDLLGVLLESNIQEIQKQGNRKDGGMTINDVIEECKLFYFAGQETTGVLLTWTTILLSKHPEWQERAREEVLQAFGKNKPEFERLNHLKYVSMILYEVLRLYPPVIDLTKIIHEDTKLGPYTIPAGTQVMLPTVMLHREKSIWGEDAMEFNPMRFADGVANATKNNVTYLPFSWGPRVCLGQNFALLQAKLGLAMILQRFKFDVAPSYVHAPFTILTVQPQFGSHVIYKKLERQNF</sequence>
<keyword id="KW-0256">Endoplasmic reticulum</keyword>
<keyword id="KW-0349">Heme</keyword>
<keyword id="KW-0408">Iron</keyword>
<keyword id="KW-0472">Membrane</keyword>
<keyword id="KW-0479">Metal-binding</keyword>
<keyword id="KW-0503">Monooxygenase</keyword>
<keyword id="KW-0560">Oxidoreductase</keyword>
<keyword id="KW-0812">Transmembrane</keyword>
<keyword id="KW-1133">Transmembrane helix</keyword>
<reference key="1">
    <citation type="journal article" date="2013" name="Plant Cell">
        <title>A 7-deoxyloganetic Acid glucosyltransferase contributes a key step in secologanin biosynthesis in madagascar periwinkle.</title>
        <authorList>
            <person name="Asada K."/>
            <person name="Salim V."/>
            <person name="Masada-Atsumi S."/>
            <person name="Edmunds E."/>
            <person name="Nagatoshi M."/>
            <person name="Terasaka K."/>
            <person name="Mizukami H."/>
            <person name="De Luca V."/>
        </authorList>
    </citation>
    <scope>NUCLEOTIDE SEQUENCE [MRNA]</scope>
    <scope>FUNCTION</scope>
    <scope>CATALYTIC ACTIVITY</scope>
    <scope>DISRUPTION PHENOTYPE</scope>
    <scope>PATHWAY</scope>
    <scope>TISSUE SPECIFICITY</scope>
    <source>
        <strain>cv. Little Delicata</strain>
    </source>
</reference>
<reference key="2">
    <citation type="journal article" date="2014" name="Nat. Commun.">
        <title>The seco-iridoid pathway from Catharanthus roseus.</title>
        <authorList>
            <person name="Miettinen K."/>
            <person name="Dong L."/>
            <person name="Navrot N."/>
            <person name="Schneider T."/>
            <person name="Burlat V."/>
            <person name="Pollier J."/>
            <person name="Woittiez L."/>
            <person name="van der Krol S."/>
            <person name="Lugan R."/>
            <person name="Ilc T."/>
            <person name="Verpoorte R."/>
            <person name="Oksman-Caldentey K.M."/>
            <person name="Martinoia E."/>
            <person name="Bouwmeester H."/>
            <person name="Goossens A."/>
            <person name="Memelink J."/>
            <person name="Werck-Reichhart D."/>
        </authorList>
    </citation>
    <scope>NUCLEOTIDE SEQUENCE [MRNA]</scope>
    <scope>INDUCTION BY JASMONIC ACID</scope>
    <source>
        <strain>cv. Little Bright Eyes</strain>
    </source>
</reference>
<reference key="3">
    <citation type="journal article" date="2015" name="BMC Genomics">
        <title>Characterization of a second secologanin synthase isoform producing both secologanin and secoxyloganin allows enhanced de novo assembly of a Catharanthus roseus transcriptome.</title>
        <authorList>
            <person name="Duge de Bernonville T."/>
            <person name="Foureau E."/>
            <person name="Parage C."/>
            <person name="Lanoue A."/>
            <person name="Clastre M."/>
            <person name="Londono M.A."/>
            <person name="Oudin A."/>
            <person name="Houille B."/>
            <person name="Papon N."/>
            <person name="Besseau S."/>
            <person name="Glevarec G."/>
            <person name="Atehortua L."/>
            <person name="Giglioli-Guivarc'h N."/>
            <person name="St-Pierre B."/>
            <person name="De Luca V."/>
            <person name="O'Connor S.E."/>
            <person name="Courdavault V."/>
        </authorList>
    </citation>
    <scope>FUNCTION</scope>
    <scope>CATALYTIC ACTIVITY</scope>
    <scope>SUBCELLULAR LOCATION</scope>
</reference>
<dbReference type="EC" id="1.14.19.62" evidence="4 6"/>
<dbReference type="EMBL" id="KF415117">
    <property type="protein sequence ID" value="AGX93064.1"/>
    <property type="molecule type" value="mRNA"/>
</dbReference>
<dbReference type="EMBL" id="KF309242">
    <property type="protein sequence ID" value="AHK60848.1"/>
    <property type="molecule type" value="mRNA"/>
</dbReference>
<dbReference type="SMR" id="U5NDT8"/>
<dbReference type="GlyCosmos" id="U5NDT8">
    <property type="glycosylation" value="3 sites, No reported glycans"/>
</dbReference>
<dbReference type="OrthoDB" id="1470350at2759"/>
<dbReference type="BRENDA" id="1.14.19.62">
    <property type="organism ID" value="1211"/>
</dbReference>
<dbReference type="BRENDA" id="1.3.3.9">
    <property type="organism ID" value="1211"/>
</dbReference>
<dbReference type="GO" id="GO:0005789">
    <property type="term" value="C:endoplasmic reticulum membrane"/>
    <property type="evidence" value="ECO:0007669"/>
    <property type="project" value="UniProtKB-SubCell"/>
</dbReference>
<dbReference type="GO" id="GO:0020037">
    <property type="term" value="F:heme binding"/>
    <property type="evidence" value="ECO:0007669"/>
    <property type="project" value="InterPro"/>
</dbReference>
<dbReference type="GO" id="GO:0005506">
    <property type="term" value="F:iron ion binding"/>
    <property type="evidence" value="ECO:0007669"/>
    <property type="project" value="InterPro"/>
</dbReference>
<dbReference type="GO" id="GO:0004497">
    <property type="term" value="F:monooxygenase activity"/>
    <property type="evidence" value="ECO:0007669"/>
    <property type="project" value="UniProtKB-KW"/>
</dbReference>
<dbReference type="GO" id="GO:0016705">
    <property type="term" value="F:oxidoreductase activity, acting on paired donors, with incorporation or reduction of molecular oxygen"/>
    <property type="evidence" value="ECO:0007669"/>
    <property type="project" value="InterPro"/>
</dbReference>
<dbReference type="GO" id="GO:0050616">
    <property type="term" value="F:secologanin synthase activity"/>
    <property type="evidence" value="ECO:0000314"/>
    <property type="project" value="UniProtKB"/>
</dbReference>
<dbReference type="GO" id="GO:0009820">
    <property type="term" value="P:alkaloid metabolic process"/>
    <property type="evidence" value="ECO:0000314"/>
    <property type="project" value="UniProtKB"/>
</dbReference>
<dbReference type="GO" id="GO:0009753">
    <property type="term" value="P:response to jasmonic acid"/>
    <property type="evidence" value="ECO:0000270"/>
    <property type="project" value="UniProtKB"/>
</dbReference>
<dbReference type="CDD" id="cd20642">
    <property type="entry name" value="CYP72"/>
    <property type="match status" value="1"/>
</dbReference>
<dbReference type="FunFam" id="1.10.630.10:FF:000029">
    <property type="entry name" value="Cytochrome P450 734A1"/>
    <property type="match status" value="1"/>
</dbReference>
<dbReference type="Gene3D" id="1.10.630.10">
    <property type="entry name" value="Cytochrome P450"/>
    <property type="match status" value="1"/>
</dbReference>
<dbReference type="InterPro" id="IPR001128">
    <property type="entry name" value="Cyt_P450"/>
</dbReference>
<dbReference type="InterPro" id="IPR017972">
    <property type="entry name" value="Cyt_P450_CS"/>
</dbReference>
<dbReference type="InterPro" id="IPR002401">
    <property type="entry name" value="Cyt_P450_E_grp-I"/>
</dbReference>
<dbReference type="InterPro" id="IPR036396">
    <property type="entry name" value="Cyt_P450_sf"/>
</dbReference>
<dbReference type="InterPro" id="IPR050665">
    <property type="entry name" value="Cytochrome_P450_Monooxygen"/>
</dbReference>
<dbReference type="PANTHER" id="PTHR24282:SF255">
    <property type="entry name" value="CYTOCHROME P450 72A11-RELATED"/>
    <property type="match status" value="1"/>
</dbReference>
<dbReference type="PANTHER" id="PTHR24282">
    <property type="entry name" value="CYTOCHROME P450 FAMILY MEMBER"/>
    <property type="match status" value="1"/>
</dbReference>
<dbReference type="Pfam" id="PF00067">
    <property type="entry name" value="p450"/>
    <property type="match status" value="1"/>
</dbReference>
<dbReference type="PRINTS" id="PR00463">
    <property type="entry name" value="EP450I"/>
</dbReference>
<dbReference type="PRINTS" id="PR00385">
    <property type="entry name" value="P450"/>
</dbReference>
<dbReference type="SUPFAM" id="SSF48264">
    <property type="entry name" value="Cytochrome P450"/>
    <property type="match status" value="1"/>
</dbReference>
<dbReference type="PROSITE" id="PS00086">
    <property type="entry name" value="CYTOCHROME_P450"/>
    <property type="match status" value="1"/>
</dbReference>
<name>SLS2_CATRO</name>
<comment type="function">
    <text evidence="4 6">Component of the seco-iridoid and derivatives monoterpenoid indole alkaloids (MIAs, e.g. secologanin) biosynthesis pathway. Catalyzes the conversion of loganin into secologanin (PubMed:24104568, PubMed:26285573). Catalyzes the conversion of secologanin into secoxyloganin (PubMed:26285573).</text>
</comment>
<comment type="catalytic activity">
    <reaction evidence="4 6">
        <text>loganin + reduced [NADPH--hemoprotein reductase] + O2 = secologanin + oxidized [NADPH--hemoprotein reductase] + 2 H2O + H(+)</text>
        <dbReference type="Rhea" id="RHEA:20585"/>
        <dbReference type="Rhea" id="RHEA-COMP:11964"/>
        <dbReference type="Rhea" id="RHEA-COMP:11965"/>
        <dbReference type="ChEBI" id="CHEBI:15377"/>
        <dbReference type="ChEBI" id="CHEBI:15378"/>
        <dbReference type="ChEBI" id="CHEBI:15379"/>
        <dbReference type="ChEBI" id="CHEBI:15771"/>
        <dbReference type="ChEBI" id="CHEBI:18002"/>
        <dbReference type="ChEBI" id="CHEBI:57618"/>
        <dbReference type="ChEBI" id="CHEBI:58210"/>
        <dbReference type="EC" id="1.14.19.62"/>
    </reaction>
    <physiologicalReaction direction="left-to-right" evidence="6">
        <dbReference type="Rhea" id="RHEA:20586"/>
    </physiologicalReaction>
</comment>
<comment type="catalytic activity">
    <reaction evidence="6">
        <text>secologanin + reduced [NADPH--hemoprotein reductase] + O2 = secoxyloganin + oxidized [NADPH--hemoprotein reductase] + H2O + 2 H(+)</text>
        <dbReference type="Rhea" id="RHEA:72667"/>
        <dbReference type="Rhea" id="RHEA-COMP:11964"/>
        <dbReference type="Rhea" id="RHEA-COMP:11965"/>
        <dbReference type="ChEBI" id="CHEBI:15377"/>
        <dbReference type="ChEBI" id="CHEBI:15378"/>
        <dbReference type="ChEBI" id="CHEBI:15379"/>
        <dbReference type="ChEBI" id="CHEBI:18002"/>
        <dbReference type="ChEBI" id="CHEBI:57618"/>
        <dbReference type="ChEBI" id="CHEBI:58210"/>
        <dbReference type="ChEBI" id="CHEBI:192364"/>
    </reaction>
    <physiologicalReaction direction="left-to-right" evidence="6">
        <dbReference type="Rhea" id="RHEA:72668"/>
    </physiologicalReaction>
</comment>
<comment type="cofactor">
    <cofactor evidence="2">
        <name>heme</name>
        <dbReference type="ChEBI" id="CHEBI:30413"/>
    </cofactor>
</comment>
<comment type="pathway">
    <text evidence="4">Alkaloid biosynthesis.</text>
</comment>
<comment type="subcellular location">
    <subcellularLocation>
        <location evidence="6">Endoplasmic reticulum membrane</location>
        <topology evidence="3">Single-pass membrane protein</topology>
    </subcellularLocation>
</comment>
<comment type="tissue specificity">
    <text evidence="4">Expressed in leaves (especially in leaf epidermis), and, to a lower extent, in roots, stems, flower buds and flowers.</text>
</comment>
<comment type="induction">
    <text evidence="5">By jasmonic acid (MeJA).</text>
</comment>
<comment type="disruption phenotype">
    <text evidence="4">Large increases in loganin accumulation.</text>
</comment>
<comment type="similarity">
    <text evidence="10">Belongs to the cytochrome P450 family.</text>
</comment>
<comment type="online information" name="ORCAE database">
    <link uri="https://orcae.psb.ugent.be/taxa/catro/regular/v1/"/>
</comment>
<protein>
    <recommendedName>
        <fullName evidence="9">Secologanin synthase 2</fullName>
        <ecNumber evidence="4 6">1.14.19.62</ecNumber>
    </recommendedName>
    <alternativeName>
        <fullName evidence="8">Cytochrome P450 72C</fullName>
        <shortName evidence="8">CrCYP72C</shortName>
    </alternativeName>
    <alternativeName>
        <fullName evidence="7">Secologanin synthase</fullName>
        <shortName evidence="7">CrSLS</shortName>
    </alternativeName>
</protein>
<accession>U5NDT8</accession>